<keyword id="KW-0025">Alternative splicing</keyword>
<keyword id="KW-0175">Coiled coil</keyword>
<keyword id="KW-0880">Kelch repeat</keyword>
<keyword id="KW-0446">Lipid-binding</keyword>
<keyword id="KW-0576">Peroxisome</keyword>
<keyword id="KW-1185">Reference proteome</keyword>
<keyword id="KW-0677">Repeat</keyword>
<gene>
    <name evidence="7" type="primary">ACBP6</name>
    <name evidence="11" type="ordered locus">Os03g0835600</name>
    <name evidence="10" type="ordered locus">LOC_Os03g61930</name>
    <name evidence="9" type="ORF">OSJNBa0096I06.14</name>
</gene>
<name>ACBP6_ORYSJ</name>
<accession>Q75LJ4</accession>
<accession>Q10AZ9</accession>
<accession>Q10B01</accession>
<organism>
    <name type="scientific">Oryza sativa subsp. japonica</name>
    <name type="common">Rice</name>
    <dbReference type="NCBI Taxonomy" id="39947"/>
    <lineage>
        <taxon>Eukaryota</taxon>
        <taxon>Viridiplantae</taxon>
        <taxon>Streptophyta</taxon>
        <taxon>Embryophyta</taxon>
        <taxon>Tracheophyta</taxon>
        <taxon>Spermatophyta</taxon>
        <taxon>Magnoliopsida</taxon>
        <taxon>Liliopsida</taxon>
        <taxon>Poales</taxon>
        <taxon>Poaceae</taxon>
        <taxon>BOP clade</taxon>
        <taxon>Oryzoideae</taxon>
        <taxon>Oryzeae</taxon>
        <taxon>Oryzinae</taxon>
        <taxon>Oryza</taxon>
        <taxon>Oryza sativa</taxon>
    </lineage>
</organism>
<feature type="chain" id="PRO_0000442036" description="Acyl-CoA-binding domain-containing protein 6">
    <location>
        <begin position="1"/>
        <end position="656"/>
    </location>
</feature>
<feature type="domain" description="ACB" evidence="3">
    <location>
        <begin position="8"/>
        <end position="102"/>
    </location>
</feature>
<feature type="repeat" description="Kelch 1" evidence="2">
    <location>
        <begin position="194"/>
        <end position="241"/>
    </location>
</feature>
<feature type="repeat" description="Kelch 2" evidence="2">
    <location>
        <begin position="254"/>
        <end position="304"/>
    </location>
</feature>
<feature type="repeat" description="Kelch 3" evidence="2">
    <location>
        <begin position="305"/>
        <end position="354"/>
    </location>
</feature>
<feature type="repeat" description="Kelch 4" evidence="2">
    <location>
        <begin position="356"/>
        <end position="405"/>
    </location>
</feature>
<feature type="repeat" description="Kelch 5" evidence="2">
    <location>
        <begin position="406"/>
        <end position="454"/>
    </location>
</feature>
<feature type="repeat" description="Kelch 6" evidence="2">
    <location>
        <begin position="461"/>
        <end position="507"/>
    </location>
</feature>
<feature type="region of interest" description="Disordered" evidence="4">
    <location>
        <begin position="129"/>
        <end position="148"/>
    </location>
</feature>
<feature type="region of interest" description="Disordered" evidence="4">
    <location>
        <begin position="627"/>
        <end position="656"/>
    </location>
</feature>
<feature type="coiled-coil region" evidence="2">
    <location>
        <begin position="527"/>
        <end position="636"/>
    </location>
</feature>
<feature type="binding site" evidence="1">
    <location>
        <begin position="44"/>
        <end position="48"/>
    </location>
    <ligand>
        <name>an acyl-CoA</name>
        <dbReference type="ChEBI" id="CHEBI:58342"/>
    </ligand>
</feature>
<feature type="binding site" evidence="1">
    <location>
        <position position="70"/>
    </location>
    <ligand>
        <name>an acyl-CoA</name>
        <dbReference type="ChEBI" id="CHEBI:58342"/>
    </ligand>
</feature>
<feature type="splice variant" id="VSP_059162" description="In isoform 2.">
    <location>
        <position position="528"/>
    </location>
</feature>
<proteinExistence type="evidence at transcript level"/>
<protein>
    <recommendedName>
        <fullName evidence="8">Acyl-CoA-binding domain-containing protein 6</fullName>
        <shortName evidence="7">Acyl-CoA binding protein 6</shortName>
        <shortName evidence="7">OsACBP6</shortName>
    </recommendedName>
</protein>
<evidence type="ECO:0000250" key="1">
    <source>
        <dbReference type="UniProtKB" id="P07107"/>
    </source>
</evidence>
<evidence type="ECO:0000255" key="2"/>
<evidence type="ECO:0000255" key="3">
    <source>
        <dbReference type="PROSITE-ProRule" id="PRU00573"/>
    </source>
</evidence>
<evidence type="ECO:0000256" key="4">
    <source>
        <dbReference type="SAM" id="MobiDB-lite"/>
    </source>
</evidence>
<evidence type="ECO:0000269" key="5">
    <source>
    </source>
</evidence>
<evidence type="ECO:0000269" key="6">
    <source>
    </source>
</evidence>
<evidence type="ECO:0000303" key="7">
    <source>
    </source>
</evidence>
<evidence type="ECO:0000305" key="8"/>
<evidence type="ECO:0000312" key="9">
    <source>
        <dbReference type="EMBL" id="AAR88580.1"/>
    </source>
</evidence>
<evidence type="ECO:0000312" key="10">
    <source>
        <dbReference type="EMBL" id="ABF99747.1"/>
    </source>
</evidence>
<evidence type="ECO:0000312" key="11">
    <source>
        <dbReference type="EMBL" id="BAS87247.1"/>
    </source>
</evidence>
<comment type="function">
    <text evidence="5 6">Binds medium- and long-chain acyl-CoA esters with high affinity. Can interact in vitro with linoleoyl-CoA and linolenoyl-CoA (PubMed:21128943). Binds phosphatidic acid (PA) and phosphatidylcholine (PC) in vitro. May play a role in the biosynthesis of phospholipids. May be involved in lipid degradation via peroxisomal beta-oxydation (PubMed:24738983).</text>
</comment>
<comment type="subcellular location">
    <subcellularLocation>
        <location evidence="6">Peroxisome</location>
    </subcellularLocation>
</comment>
<comment type="alternative products">
    <event type="alternative splicing"/>
    <isoform>
        <id>Q75LJ4-1</id>
        <name>1</name>
        <sequence type="displayed"/>
    </isoform>
    <isoform>
        <id>Q75LJ4-2</id>
        <name>2</name>
        <sequence type="described" ref="VSP_059162"/>
    </isoform>
</comment>
<comment type="tissue specificity">
    <text evidence="5">Highly expressed in leaves. Expressed in roots and seeds.</text>
</comment>
<comment type="induction">
    <text evidence="5">Induced by drought stress and wounding.</text>
</comment>
<comment type="miscellaneous">
    <molecule>Isoform 2</molecule>
    <text evidence="8">May be due to a competing acceptor splice site.</text>
</comment>
<comment type="similarity">
    <text evidence="8">Belongs to the ACBP family.</text>
</comment>
<comment type="sequence caution" evidence="8">
    <conflict type="erroneous gene model prediction">
        <sequence resource="EMBL-CDS" id="ABF99749"/>
    </conflict>
</comment>
<dbReference type="EMBL" id="AC092557">
    <property type="protein sequence ID" value="AAR88580.1"/>
    <property type="molecule type" value="Genomic_DNA"/>
</dbReference>
<dbReference type="EMBL" id="DP000009">
    <property type="protein sequence ID" value="ABF99747.1"/>
    <property type="molecule type" value="Genomic_DNA"/>
</dbReference>
<dbReference type="EMBL" id="DP000009">
    <property type="protein sequence ID" value="ABF99748.1"/>
    <property type="molecule type" value="Genomic_DNA"/>
</dbReference>
<dbReference type="EMBL" id="DP000009">
    <property type="protein sequence ID" value="ABF99749.1"/>
    <property type="status" value="ALT_SEQ"/>
    <property type="molecule type" value="Genomic_DNA"/>
</dbReference>
<dbReference type="EMBL" id="AP008209">
    <property type="protein sequence ID" value="BAF13733.1"/>
    <property type="molecule type" value="Genomic_DNA"/>
</dbReference>
<dbReference type="EMBL" id="AP014959">
    <property type="protein sequence ID" value="BAS87247.1"/>
    <property type="molecule type" value="Genomic_DNA"/>
</dbReference>
<dbReference type="RefSeq" id="XP_015629756.1">
    <property type="nucleotide sequence ID" value="XM_015774270.1"/>
</dbReference>
<dbReference type="SMR" id="Q75LJ4"/>
<dbReference type="FunCoup" id="Q75LJ4">
    <property type="interactions" value="1383"/>
</dbReference>
<dbReference type="STRING" id="39947.Q75LJ4"/>
<dbReference type="PaxDb" id="39947-Q75LJ4"/>
<dbReference type="KEGG" id="dosa:Os03g0835600"/>
<dbReference type="eggNOG" id="KOG0379">
    <property type="taxonomic scope" value="Eukaryota"/>
</dbReference>
<dbReference type="eggNOG" id="KOG0817">
    <property type="taxonomic scope" value="Eukaryota"/>
</dbReference>
<dbReference type="InParanoid" id="Q75LJ4"/>
<dbReference type="OMA" id="IEHSKWT"/>
<dbReference type="OrthoDB" id="10251809at2759"/>
<dbReference type="Proteomes" id="UP000000763">
    <property type="component" value="Chromosome 3"/>
</dbReference>
<dbReference type="Proteomes" id="UP000059680">
    <property type="component" value="Chromosome 3"/>
</dbReference>
<dbReference type="GO" id="GO:0005829">
    <property type="term" value="C:cytosol"/>
    <property type="evidence" value="ECO:0000318"/>
    <property type="project" value="GO_Central"/>
</dbReference>
<dbReference type="GO" id="GO:0005777">
    <property type="term" value="C:peroxisome"/>
    <property type="evidence" value="ECO:0007669"/>
    <property type="project" value="UniProtKB-SubCell"/>
</dbReference>
<dbReference type="GO" id="GO:0000062">
    <property type="term" value="F:fatty-acyl-CoA binding"/>
    <property type="evidence" value="ECO:0000318"/>
    <property type="project" value="GO_Central"/>
</dbReference>
<dbReference type="GO" id="GO:0006869">
    <property type="term" value="P:lipid transport"/>
    <property type="evidence" value="ECO:0000318"/>
    <property type="project" value="GO_Central"/>
</dbReference>
<dbReference type="FunFam" id="2.120.10.80:FF:000098">
    <property type="entry name" value="Acyl-CoA-binding domain-containing protein 4"/>
    <property type="match status" value="1"/>
</dbReference>
<dbReference type="FunFam" id="1.20.80.10:FF:000024">
    <property type="entry name" value="acyl-CoA-binding domain-containing protein 4 isoform X1"/>
    <property type="match status" value="1"/>
</dbReference>
<dbReference type="Gene3D" id="1.20.80.10">
    <property type="match status" value="1"/>
</dbReference>
<dbReference type="Gene3D" id="2.120.10.80">
    <property type="entry name" value="Kelch-type beta propeller"/>
    <property type="match status" value="2"/>
</dbReference>
<dbReference type="InterPro" id="IPR056819">
    <property type="entry name" value="ACBP4-6_C"/>
</dbReference>
<dbReference type="InterPro" id="IPR000582">
    <property type="entry name" value="Acyl-CoA-binding_protein"/>
</dbReference>
<dbReference type="InterPro" id="IPR035984">
    <property type="entry name" value="Acyl-CoA-binding_sf"/>
</dbReference>
<dbReference type="InterPro" id="IPR014352">
    <property type="entry name" value="FERM/acyl-CoA-bd_prot_sf"/>
</dbReference>
<dbReference type="InterPro" id="IPR015915">
    <property type="entry name" value="Kelch-typ_b-propeller"/>
</dbReference>
<dbReference type="PANTHER" id="PTHR46093:SF3">
    <property type="entry name" value="ACYL-COA-BINDING DOMAIN-CONTAINING PROTEIN 4"/>
    <property type="match status" value="1"/>
</dbReference>
<dbReference type="PANTHER" id="PTHR46093">
    <property type="entry name" value="ACYL-COA-BINDING DOMAIN-CONTAINING PROTEIN 5"/>
    <property type="match status" value="1"/>
</dbReference>
<dbReference type="Pfam" id="PF00887">
    <property type="entry name" value="ACBP"/>
    <property type="match status" value="1"/>
</dbReference>
<dbReference type="Pfam" id="PF24922">
    <property type="entry name" value="ACBP4_C"/>
    <property type="match status" value="1"/>
</dbReference>
<dbReference type="Pfam" id="PF24681">
    <property type="entry name" value="Kelch_KLHDC2_KLHL20_DRC7"/>
    <property type="match status" value="2"/>
</dbReference>
<dbReference type="SUPFAM" id="SSF47027">
    <property type="entry name" value="Acyl-CoA binding protein"/>
    <property type="match status" value="1"/>
</dbReference>
<dbReference type="SUPFAM" id="SSF117281">
    <property type="entry name" value="Kelch motif"/>
    <property type="match status" value="2"/>
</dbReference>
<dbReference type="PROSITE" id="PS51228">
    <property type="entry name" value="ACB_2"/>
    <property type="match status" value="1"/>
</dbReference>
<reference key="1">
    <citation type="journal article" date="2005" name="Genome Res.">
        <title>Sequence, annotation, and analysis of synteny between rice chromosome 3 and diverged grass species.</title>
        <authorList>
            <consortium name="The rice chromosome 3 sequencing consortium"/>
            <person name="Buell C.R."/>
            <person name="Yuan Q."/>
            <person name="Ouyang S."/>
            <person name="Liu J."/>
            <person name="Zhu W."/>
            <person name="Wang A."/>
            <person name="Maiti R."/>
            <person name="Haas B."/>
            <person name="Wortman J."/>
            <person name="Pertea M."/>
            <person name="Jones K.M."/>
            <person name="Kim M."/>
            <person name="Overton L."/>
            <person name="Tsitrin T."/>
            <person name="Fadrosh D."/>
            <person name="Bera J."/>
            <person name="Weaver B."/>
            <person name="Jin S."/>
            <person name="Johri S."/>
            <person name="Reardon M."/>
            <person name="Webb K."/>
            <person name="Hill J."/>
            <person name="Moffat K."/>
            <person name="Tallon L."/>
            <person name="Van Aken S."/>
            <person name="Lewis M."/>
            <person name="Utterback T."/>
            <person name="Feldblyum T."/>
            <person name="Zismann V."/>
            <person name="Iobst S."/>
            <person name="Hsiao J."/>
            <person name="de Vazeille A.R."/>
            <person name="Salzberg S.L."/>
            <person name="White O."/>
            <person name="Fraser C.M."/>
            <person name="Yu Y."/>
            <person name="Kim H."/>
            <person name="Rambo T."/>
            <person name="Currie J."/>
            <person name="Collura K."/>
            <person name="Kernodle-Thompson S."/>
            <person name="Wei F."/>
            <person name="Kudrna K."/>
            <person name="Ammiraju J.S.S."/>
            <person name="Luo M."/>
            <person name="Goicoechea J.L."/>
            <person name="Wing R.A."/>
            <person name="Henry D."/>
            <person name="Oates R."/>
            <person name="Palmer M."/>
            <person name="Pries G."/>
            <person name="Saski C."/>
            <person name="Simmons J."/>
            <person name="Soderlund C."/>
            <person name="Nelson W."/>
            <person name="de la Bastide M."/>
            <person name="Spiegel L."/>
            <person name="Nascimento L."/>
            <person name="Huang E."/>
            <person name="Preston R."/>
            <person name="Zutavern T."/>
            <person name="Palmer L."/>
            <person name="O'Shaughnessy A."/>
            <person name="Dike S."/>
            <person name="McCombie W.R."/>
            <person name="Minx P."/>
            <person name="Cordum H."/>
            <person name="Wilson R."/>
            <person name="Jin W."/>
            <person name="Lee H.R."/>
            <person name="Jiang J."/>
            <person name="Jackson S."/>
        </authorList>
    </citation>
    <scope>NUCLEOTIDE SEQUENCE [LARGE SCALE GENOMIC DNA]</scope>
    <source>
        <strain>cv. Nipponbare</strain>
    </source>
</reference>
<reference key="2">
    <citation type="journal article" date="2005" name="Nature">
        <title>The map-based sequence of the rice genome.</title>
        <authorList>
            <consortium name="International rice genome sequencing project (IRGSP)"/>
        </authorList>
    </citation>
    <scope>NUCLEOTIDE SEQUENCE [LARGE SCALE GENOMIC DNA]</scope>
    <source>
        <strain>cv. Nipponbare</strain>
    </source>
</reference>
<reference key="3">
    <citation type="journal article" date="2008" name="Nucleic Acids Res.">
        <title>The rice annotation project database (RAP-DB): 2008 update.</title>
        <authorList>
            <consortium name="The rice annotation project (RAP)"/>
        </authorList>
    </citation>
    <scope>GENOME REANNOTATION</scope>
    <source>
        <strain>cv. Nipponbare</strain>
    </source>
</reference>
<reference key="4">
    <citation type="journal article" date="2013" name="Rice">
        <title>Improvement of the Oryza sativa Nipponbare reference genome using next generation sequence and optical map data.</title>
        <authorList>
            <person name="Kawahara Y."/>
            <person name="de la Bastide M."/>
            <person name="Hamilton J.P."/>
            <person name="Kanamori H."/>
            <person name="McCombie W.R."/>
            <person name="Ouyang S."/>
            <person name="Schwartz D.C."/>
            <person name="Tanaka T."/>
            <person name="Wu J."/>
            <person name="Zhou S."/>
            <person name="Childs K.L."/>
            <person name="Davidson R.M."/>
            <person name="Lin H."/>
            <person name="Quesada-Ocampo L."/>
            <person name="Vaillancourt B."/>
            <person name="Sakai H."/>
            <person name="Lee S.S."/>
            <person name="Kim J."/>
            <person name="Numa H."/>
            <person name="Itoh T."/>
            <person name="Buell C.R."/>
            <person name="Matsumoto T."/>
        </authorList>
    </citation>
    <scope>GENOME REANNOTATION</scope>
    <source>
        <strain>cv. Nipponbare</strain>
    </source>
</reference>
<reference key="5">
    <citation type="journal article" date="2011" name="New Phytol.">
        <title>The rice acyl-CoA-binding protein gene family: phylogeny, expression and functional analysis.</title>
        <authorList>
            <person name="Meng W."/>
            <person name="Su Y.C."/>
            <person name="Saunders R.M."/>
            <person name="Chye M.L."/>
        </authorList>
    </citation>
    <scope>FUNCTION</scope>
    <scope>TISSUE SPECIFICITY</scope>
    <scope>INDUCTION</scope>
    <scope>GENE FAMILY</scope>
    <scope>NOMENCLATURE</scope>
</reference>
<reference key="6">
    <citation type="journal article" date="2014" name="New Phytol.">
        <title>Subcellular localization of rice acyl-CoA-binding proteins (ACBPs) indicates that OsACBP6::GFP is targeted to the peroxisomes.</title>
        <authorList>
            <person name="Meng W."/>
            <person name="Hsiao A.S."/>
            <person name="Gao C."/>
            <person name="Jiang L."/>
            <person name="Chye M.L."/>
        </authorList>
    </citation>
    <scope>FUNCTION</scope>
    <scope>SUBCELLULAR LOCATION</scope>
</reference>
<sequence>MASSGLAYPDRFYAAAAYAGFGAGGATSSSAISRFQNDVALLLYGLYQQATVGPCNVPKPRAWNPVEQSKWTSWHGLGSMPSAEAMRLFVKILEEEDPGWYSRVPEFNPEPVVDIEMHKPKEDPKVILASTNGTSVPEPKTISENGSSVETQDKVVILEGLSAVSVHEEWTPLSVNGQRPKPRYEHGATVVQDKMYIFGGNHNGRYLSDLQALDLKSLTWSKIDAKFQAGSTDSSKSAQVSSCAGHSLISWGNKFFSVAGHTKDPSENITVKEFDPHTCTWSIVKTYGKPPVSRGGQSVTLVGTTLVLFGGEDAKRCLLNDLHILDLETMTWDDVDAIGTPPPRSDHAAACHADRYLLIFGGGSHATCFNDLHVLDLQTMEWSRPKQQGLAPSPRAGHAGATVGENWYIVGGGNNKSGVSETLVLNMSTLTWSVVSSVEGRVPLASEGMTLVHSNYNGDDYLISFGGYNGRYSNEVFALKLTLKSDLQSKTKEHASDGTSSVLEPEVELSHDGKIREIAMDSADSDLKKDDANELLVALKAEKEELEAALNREQVQTIQLKEEIAEAEARNAELTKELQTVRGQLAAEQSRCFKLEVDVAELRQKLQSMDALEREVELLRRQKAASEQAALEAKQRQSSSGMWGWLVGTPPDKSES</sequence>